<sequence>MDGGNQSEGSEFLLLGMSESPEQQRILFWMFLSMYLVTVVGNVLIILAISSDSRLHTPVYFFLANLSFTDLFFVTNTIPKMLVNLQSHNKAISYAGCLTQLYFLVSLVALDNLILAVMAYDRYVAICCPLHYTTAMSPKLCILLLSLCWVLSVLYGLIHTLLMTRVTFCGSRKIHYIFCEMYVLLRMACSNIQINHTVLIATGCFIFLIPFGFVIISYVLIIRAILRIPSVSKKYKAFSTCASHLGAVSLFYGTLCMVYLKPLHTYSVKDSVATVMYAVVTPMMNPFIYSLRNKDMHGALGRLLDKHFKRLT</sequence>
<accession>P34982</accession>
<accession>Q6IFL8</accession>
<accession>Q96RA4</accession>
<accession>Q9UM78</accession>
<evidence type="ECO:0000255" key="1"/>
<evidence type="ECO:0000255" key="2">
    <source>
        <dbReference type="PROSITE-ProRule" id="PRU00521"/>
    </source>
</evidence>
<evidence type="ECO:0000269" key="3">
    <source>
    </source>
</evidence>
<evidence type="ECO:0000269" key="4">
    <source>
    </source>
</evidence>
<evidence type="ECO:0000269" key="5">
    <source>
    </source>
</evidence>
<evidence type="ECO:0000269" key="6">
    <source>
    </source>
</evidence>
<evidence type="ECO:0000269" key="7">
    <source>
    </source>
</evidence>
<proteinExistence type="evidence at protein level"/>
<organism>
    <name type="scientific">Homo sapiens</name>
    <name type="common">Human</name>
    <dbReference type="NCBI Taxonomy" id="9606"/>
    <lineage>
        <taxon>Eukaryota</taxon>
        <taxon>Metazoa</taxon>
        <taxon>Chordata</taxon>
        <taxon>Craniata</taxon>
        <taxon>Vertebrata</taxon>
        <taxon>Euteleostomi</taxon>
        <taxon>Mammalia</taxon>
        <taxon>Eutheria</taxon>
        <taxon>Euarchontoglires</taxon>
        <taxon>Primates</taxon>
        <taxon>Haplorrhini</taxon>
        <taxon>Catarrhini</taxon>
        <taxon>Hominidae</taxon>
        <taxon>Homo</taxon>
    </lineage>
</organism>
<feature type="chain" id="PRO_0000150418" description="Olfactory receptor 1D2">
    <location>
        <begin position="1"/>
        <end position="312"/>
    </location>
</feature>
<feature type="topological domain" description="Extracellular" evidence="1">
    <location>
        <begin position="1"/>
        <end position="25"/>
    </location>
</feature>
<feature type="transmembrane region" description="Helical; Name=1" evidence="1">
    <location>
        <begin position="26"/>
        <end position="49"/>
    </location>
</feature>
<feature type="topological domain" description="Cytoplasmic" evidence="1">
    <location>
        <begin position="50"/>
        <end position="57"/>
    </location>
</feature>
<feature type="transmembrane region" description="Helical; Name=2" evidence="1">
    <location>
        <begin position="58"/>
        <end position="79"/>
    </location>
</feature>
<feature type="topological domain" description="Extracellular" evidence="1">
    <location>
        <begin position="80"/>
        <end position="100"/>
    </location>
</feature>
<feature type="transmembrane region" description="Helical; Name=3" evidence="1">
    <location>
        <begin position="101"/>
        <end position="120"/>
    </location>
</feature>
<feature type="topological domain" description="Cytoplasmic" evidence="1">
    <location>
        <begin position="121"/>
        <end position="139"/>
    </location>
</feature>
<feature type="transmembrane region" description="Helical; Name=4" evidence="1">
    <location>
        <begin position="140"/>
        <end position="158"/>
    </location>
</feature>
<feature type="topological domain" description="Extracellular" evidence="1">
    <location>
        <begin position="159"/>
        <end position="196"/>
    </location>
</feature>
<feature type="transmembrane region" description="Helical; Name=5" evidence="1">
    <location>
        <begin position="197"/>
        <end position="219"/>
    </location>
</feature>
<feature type="topological domain" description="Cytoplasmic" evidence="1">
    <location>
        <begin position="220"/>
        <end position="236"/>
    </location>
</feature>
<feature type="transmembrane region" description="Helical; Name=6" evidence="1">
    <location>
        <begin position="237"/>
        <end position="259"/>
    </location>
</feature>
<feature type="topological domain" description="Extracellular" evidence="1">
    <location>
        <begin position="260"/>
        <end position="271"/>
    </location>
</feature>
<feature type="transmembrane region" description="Helical; Name=7" evidence="1">
    <location>
        <begin position="272"/>
        <end position="291"/>
    </location>
</feature>
<feature type="topological domain" description="Cytoplasmic" evidence="1">
    <location>
        <begin position="292"/>
        <end position="312"/>
    </location>
</feature>
<feature type="glycosylation site" description="N-linked (GlcNAc...) asparagine" evidence="1">
    <location>
        <position position="5"/>
    </location>
</feature>
<feature type="glycosylation site" description="N-linked (GlcNAc...) asparagine" evidence="1">
    <location>
        <position position="195"/>
    </location>
</feature>
<feature type="disulfide bond" evidence="2">
    <location>
        <begin position="97"/>
        <end position="189"/>
    </location>
</feature>
<feature type="sequence variant" id="VAR_019630" description="In dbSNP:rs769423." evidence="3 7">
    <original>R</original>
    <variation>Q</variation>
    <location>
        <position position="25"/>
    </location>
</feature>
<feature type="sequence variant" id="VAR_057534" description="In dbSNP:rs9916628.">
    <original>F</original>
    <variation>Y</variation>
    <location>
        <position position="31"/>
    </location>
</feature>
<feature type="sequence variant" id="VAR_062008" description="In dbSNP:rs55803944.">
    <original>V</original>
    <variation>M</variation>
    <location>
        <position position="214"/>
    </location>
</feature>
<feature type="sequence variant" id="VAR_057535" description="In dbSNP:rs4300683.">
    <original>T</original>
    <variation>I</variation>
    <location>
        <position position="240"/>
    </location>
</feature>
<feature type="mutagenesis site" description="Abolishes nuclear translocation of ARRB2; when associated with A-232 and A-239." evidence="6">
    <original>S</original>
    <variation>A</variation>
    <location>
        <position position="230"/>
    </location>
</feature>
<feature type="mutagenesis site" description="Abolishes nuclear translocation of ARRB2; when associated with A-230 and A-239." evidence="6">
    <original>S</original>
    <variation>A</variation>
    <location>
        <position position="232"/>
    </location>
</feature>
<feature type="mutagenesis site" description="Abolishes nuclear translocation of ARRB2; when associated with A-230 and A-232." evidence="6">
    <original>S</original>
    <variation>A</variation>
    <location>
        <position position="239"/>
    </location>
</feature>
<feature type="mutagenesis site" description="Abolishes nuclear translocation of ARRB2." evidence="6">
    <original>T</original>
    <variation>A</variation>
    <location>
        <position position="312"/>
    </location>
</feature>
<comment type="function">
    <text evidence="4 5 6">Odorant receptor which may be involved in sperm chemotaxis. Bourgeonal is a strong chemoattractant for sperm in vitro and is shown to be a strong agonist for OR1D2 in vitro. May also function in olfactory reception.</text>
</comment>
<comment type="interaction">
    <interactant intactId="EBI-7590722">
        <id>P34982</id>
    </interactant>
    <interactant intactId="EBI-7590722">
        <id>P34982</id>
        <label>OR1D2</label>
    </interactant>
    <organismsDiffer>false</organismsDiffer>
    <experiments>3</experiments>
</comment>
<comment type="subcellular location">
    <subcellularLocation>
        <location evidence="6">Cell membrane</location>
        <topology evidence="6">Multi-pass membrane protein</topology>
    </subcellularLocation>
    <text>In spermatazoa is localized in the midpiece and is translocated to the head region upon receptor stimulation with bourgeonal.</text>
</comment>
<comment type="tissue specificity">
    <text evidence="4 5 6">Expressed in testis. Expressed in spermatozoa (at protein level). Expressed in olfactory epithelium.</text>
</comment>
<comment type="similarity">
    <text evidence="2">Belongs to the G-protein coupled receptor 1 family.</text>
</comment>
<comment type="online information" name="Protein Spotlight">
    <link uri="https://www.proteinspotlight.org/back_issues/115"/>
    <text>Love at first smell - Issue 115 of March 2010</text>
</comment>
<comment type="online information" name="Human Olfactory Receptor Data Exploratorium (HORDE)">
    <link uri="http://genome.weizmann.ac.il/horde/card/index/symbol:OR1D2"/>
</comment>
<dbReference type="EMBL" id="X65857">
    <property type="protein sequence ID" value="CAA46687.1"/>
    <property type="molecule type" value="Genomic_DNA"/>
</dbReference>
<dbReference type="EMBL" id="AF087917">
    <property type="protein sequence ID" value="AAF37310.1"/>
    <property type="molecule type" value="Genomic_DNA"/>
</dbReference>
<dbReference type="EMBL" id="BC069552">
    <property type="protein sequence ID" value="AAH69552.1"/>
    <property type="molecule type" value="mRNA"/>
</dbReference>
<dbReference type="EMBL" id="BC106735">
    <property type="protein sequence ID" value="AAI06736.1"/>
    <property type="molecule type" value="mRNA"/>
</dbReference>
<dbReference type="EMBL" id="BC106736">
    <property type="protein sequence ID" value="AAI06737.1"/>
    <property type="molecule type" value="mRNA"/>
</dbReference>
<dbReference type="EMBL" id="U53583">
    <property type="protein sequence ID" value="AAC99554.1"/>
    <property type="molecule type" value="Genomic_DNA"/>
</dbReference>
<dbReference type="EMBL" id="AF399535">
    <property type="protein sequence ID" value="AAK95020.1"/>
    <property type="molecule type" value="Genomic_DNA"/>
</dbReference>
<dbReference type="EMBL" id="U04678">
    <property type="protein sequence ID" value="AAA18343.1"/>
    <property type="molecule type" value="Genomic_DNA"/>
</dbReference>
<dbReference type="EMBL" id="BK004244">
    <property type="protein sequence ID" value="DAA04642.1"/>
    <property type="molecule type" value="Genomic_DNA"/>
</dbReference>
<dbReference type="CCDS" id="CCDS11019.1"/>
<dbReference type="PIR" id="A48413">
    <property type="entry name" value="A48413"/>
</dbReference>
<dbReference type="PIR" id="I38471">
    <property type="entry name" value="I38471"/>
</dbReference>
<dbReference type="RefSeq" id="NP_001373017.1">
    <property type="nucleotide sequence ID" value="NM_001386088.1"/>
</dbReference>
<dbReference type="RefSeq" id="NP_002539.2">
    <property type="nucleotide sequence ID" value="NM_002548.3"/>
</dbReference>
<dbReference type="SMR" id="P34982"/>
<dbReference type="BioGRID" id="111035">
    <property type="interactions" value="1"/>
</dbReference>
<dbReference type="DIP" id="DIP-46308N"/>
<dbReference type="FunCoup" id="P34982">
    <property type="interactions" value="467"/>
</dbReference>
<dbReference type="IntAct" id="P34982">
    <property type="interactions" value="1"/>
</dbReference>
<dbReference type="MINT" id="P34982"/>
<dbReference type="STRING" id="9606.ENSP00000493103"/>
<dbReference type="GlyCosmos" id="P34982">
    <property type="glycosylation" value="2 sites, No reported glycans"/>
</dbReference>
<dbReference type="GlyGen" id="P34982">
    <property type="glycosylation" value="2 sites"/>
</dbReference>
<dbReference type="iPTMnet" id="P34982"/>
<dbReference type="PhosphoSitePlus" id="P34982"/>
<dbReference type="BioMuta" id="OR1D2"/>
<dbReference type="DMDM" id="67477446"/>
<dbReference type="PaxDb" id="9606-ENSP00000327585"/>
<dbReference type="ProteomicsDB" id="54966"/>
<dbReference type="ABCD" id="P34982">
    <property type="antibodies" value="7 sequenced antibodies"/>
</dbReference>
<dbReference type="Antibodypedia" id="58647">
    <property type="antibodies" value="135 antibodies from 20 providers"/>
</dbReference>
<dbReference type="DNASU" id="4991"/>
<dbReference type="Ensembl" id="ENST00000641064.1">
    <property type="protein sequence ID" value="ENSP00000493077.1"/>
    <property type="gene ID" value="ENSG00000184166.3"/>
</dbReference>
<dbReference type="Ensembl" id="ENST00000641833.1">
    <property type="protein sequence ID" value="ENSP00000493103.1"/>
    <property type="gene ID" value="ENSG00000184166.3"/>
</dbReference>
<dbReference type="GeneID" id="4991"/>
<dbReference type="KEGG" id="hsa:4991"/>
<dbReference type="MANE-Select" id="ENST00000641833.1">
    <property type="protein sequence ID" value="ENSP00000493103.1"/>
    <property type="RefSeq nucleotide sequence ID" value="NM_002548.3"/>
    <property type="RefSeq protein sequence ID" value="NP_002539.2"/>
</dbReference>
<dbReference type="UCSC" id="uc010vrb.2">
    <property type="organism name" value="human"/>
</dbReference>
<dbReference type="AGR" id="HGNC:8183"/>
<dbReference type="CTD" id="4991"/>
<dbReference type="DisGeNET" id="4991"/>
<dbReference type="GeneCards" id="OR1D2"/>
<dbReference type="HGNC" id="HGNC:8183">
    <property type="gene designation" value="OR1D2"/>
</dbReference>
<dbReference type="HPA" id="ENSG00000184166">
    <property type="expression patterns" value="Low tissue specificity"/>
</dbReference>
<dbReference type="MIM" id="164342">
    <property type="type" value="gene"/>
</dbReference>
<dbReference type="neXtProt" id="NX_P34982"/>
<dbReference type="OpenTargets" id="ENSG00000184166"/>
<dbReference type="PharmGKB" id="PA32057"/>
<dbReference type="VEuPathDB" id="HostDB:ENSG00000184166"/>
<dbReference type="eggNOG" id="ENOG502T9JB">
    <property type="taxonomic scope" value="Eukaryota"/>
</dbReference>
<dbReference type="GeneTree" id="ENSGT00940000160386"/>
<dbReference type="HOGENOM" id="CLU_012526_5_5_1"/>
<dbReference type="InParanoid" id="P34982"/>
<dbReference type="OMA" id="PFGFMII"/>
<dbReference type="OrthoDB" id="9483419at2759"/>
<dbReference type="PAN-GO" id="P34982">
    <property type="GO annotations" value="3 GO annotations based on evolutionary models"/>
</dbReference>
<dbReference type="PhylomeDB" id="P34982"/>
<dbReference type="TreeFam" id="TF337210"/>
<dbReference type="PathwayCommons" id="P34982"/>
<dbReference type="Reactome" id="R-HSA-381753">
    <property type="pathway name" value="Olfactory Signaling Pathway"/>
</dbReference>
<dbReference type="Reactome" id="R-HSA-9752946">
    <property type="pathway name" value="Expression and translocation of olfactory receptors"/>
</dbReference>
<dbReference type="SignaLink" id="P34982"/>
<dbReference type="BioGRID-ORCS" id="4991">
    <property type="hits" value="261 hits in 737 CRISPR screens"/>
</dbReference>
<dbReference type="GeneWiki" id="OR1D2"/>
<dbReference type="GenomeRNAi" id="4991"/>
<dbReference type="Pharos" id="P34982">
    <property type="development level" value="Tbio"/>
</dbReference>
<dbReference type="PRO" id="PR:P34982"/>
<dbReference type="Proteomes" id="UP000005640">
    <property type="component" value="Chromosome 17"/>
</dbReference>
<dbReference type="RNAct" id="P34982">
    <property type="molecule type" value="protein"/>
</dbReference>
<dbReference type="Bgee" id="ENSG00000184166">
    <property type="expression patterns" value="Expressed in pancreatic ductal cell and 3 other cell types or tissues"/>
</dbReference>
<dbReference type="ExpressionAtlas" id="P34982">
    <property type="expression patterns" value="baseline and differential"/>
</dbReference>
<dbReference type="GO" id="GO:0005886">
    <property type="term" value="C:plasma membrane"/>
    <property type="evidence" value="ECO:0000318"/>
    <property type="project" value="GO_Central"/>
</dbReference>
<dbReference type="GO" id="GO:0004930">
    <property type="term" value="F:G protein-coupled receptor activity"/>
    <property type="evidence" value="ECO:0000304"/>
    <property type="project" value="ProtInc"/>
</dbReference>
<dbReference type="GO" id="GO:0042802">
    <property type="term" value="F:identical protein binding"/>
    <property type="evidence" value="ECO:0000353"/>
    <property type="project" value="IntAct"/>
</dbReference>
<dbReference type="GO" id="GO:0004984">
    <property type="term" value="F:olfactory receptor activity"/>
    <property type="evidence" value="ECO:0000314"/>
    <property type="project" value="UniProtKB"/>
</dbReference>
<dbReference type="GO" id="GO:0006935">
    <property type="term" value="P:chemotaxis"/>
    <property type="evidence" value="ECO:0007669"/>
    <property type="project" value="UniProtKB-KW"/>
</dbReference>
<dbReference type="GO" id="GO:0007186">
    <property type="term" value="P:G protein-coupled receptor signaling pathway"/>
    <property type="evidence" value="ECO:0000314"/>
    <property type="project" value="UniProtKB"/>
</dbReference>
<dbReference type="GO" id="GO:0007608">
    <property type="term" value="P:sensory perception of smell"/>
    <property type="evidence" value="ECO:0000304"/>
    <property type="project" value="ProtInc"/>
</dbReference>
<dbReference type="GO" id="GO:0007165">
    <property type="term" value="P:signal transduction"/>
    <property type="evidence" value="ECO:0000318"/>
    <property type="project" value="GO_Central"/>
</dbReference>
<dbReference type="GO" id="GO:0007338">
    <property type="term" value="P:single fertilization"/>
    <property type="evidence" value="ECO:0007669"/>
    <property type="project" value="UniProtKB-KW"/>
</dbReference>
<dbReference type="CDD" id="cd15918">
    <property type="entry name" value="7tmA_OR1_7-like"/>
    <property type="match status" value="1"/>
</dbReference>
<dbReference type="FunFam" id="1.20.1070.10:FF:000009">
    <property type="entry name" value="Olfactory receptor"/>
    <property type="match status" value="1"/>
</dbReference>
<dbReference type="Gene3D" id="1.20.1070.10">
    <property type="entry name" value="Rhodopsin 7-helix transmembrane proteins"/>
    <property type="match status" value="1"/>
</dbReference>
<dbReference type="InterPro" id="IPR000276">
    <property type="entry name" value="GPCR_Rhodpsn"/>
</dbReference>
<dbReference type="InterPro" id="IPR017452">
    <property type="entry name" value="GPCR_Rhodpsn_7TM"/>
</dbReference>
<dbReference type="InterPro" id="IPR000725">
    <property type="entry name" value="Olfact_rcpt"/>
</dbReference>
<dbReference type="PANTHER" id="PTHR48001">
    <property type="entry name" value="OLFACTORY RECEPTOR"/>
    <property type="match status" value="1"/>
</dbReference>
<dbReference type="Pfam" id="PF13853">
    <property type="entry name" value="7tm_4"/>
    <property type="match status" value="1"/>
</dbReference>
<dbReference type="PRINTS" id="PR00237">
    <property type="entry name" value="GPCRRHODOPSN"/>
</dbReference>
<dbReference type="PRINTS" id="PR00245">
    <property type="entry name" value="OLFACTORYR"/>
</dbReference>
<dbReference type="SUPFAM" id="SSF81321">
    <property type="entry name" value="Family A G protein-coupled receptor-like"/>
    <property type="match status" value="1"/>
</dbReference>
<dbReference type="PROSITE" id="PS00237">
    <property type="entry name" value="G_PROTEIN_RECEP_F1_1"/>
    <property type="match status" value="1"/>
</dbReference>
<dbReference type="PROSITE" id="PS50262">
    <property type="entry name" value="G_PROTEIN_RECEP_F1_2"/>
    <property type="match status" value="1"/>
</dbReference>
<keyword id="KW-1003">Cell membrane</keyword>
<keyword id="KW-0145">Chemotaxis</keyword>
<keyword id="KW-1015">Disulfide bond</keyword>
<keyword id="KW-0278">Fertilization</keyword>
<keyword id="KW-0297">G-protein coupled receptor</keyword>
<keyword id="KW-0325">Glycoprotein</keyword>
<keyword id="KW-0472">Membrane</keyword>
<keyword id="KW-0552">Olfaction</keyword>
<keyword id="KW-0675">Receptor</keyword>
<keyword id="KW-1185">Reference proteome</keyword>
<keyword id="KW-0716">Sensory transduction</keyword>
<keyword id="KW-0807">Transducer</keyword>
<keyword id="KW-0812">Transmembrane</keyword>
<keyword id="KW-1133">Transmembrane helix</keyword>
<protein>
    <recommendedName>
        <fullName>Olfactory receptor 1D2</fullName>
    </recommendedName>
    <alternativeName>
        <fullName>Olfactory receptor 17-4</fullName>
        <shortName>OR17-4</shortName>
    </alternativeName>
    <alternativeName>
        <fullName>Olfactory receptor OR17-6</fullName>
    </alternativeName>
    <alternativeName>
        <fullName>Olfactory receptor-like protein HGMP07E</fullName>
    </alternativeName>
</protein>
<reference key="1">
    <citation type="journal article" date="1993" name="Cytogenet. Cell Genet.">
        <title>The OLFR1 gene encoding the HGMP07E putative olfactory receptor maps to the 17p13--&gt;p12 region of the human genome and reveals an MspI restriction fragment length polymorphism.</title>
        <authorList>
            <person name="Schurmans S."/>
            <person name="Muscatelli F."/>
            <person name="Miot F."/>
            <person name="Mattei M.-G."/>
            <person name="Vassart G."/>
            <person name="Parmentier M."/>
        </authorList>
    </citation>
    <scope>NUCLEOTIDE SEQUENCE [GENOMIC DNA]</scope>
    <scope>VARIANT GLN-25</scope>
</reference>
<reference key="2">
    <citation type="journal article" date="2000" name="Genomics">
        <title>Sequence, structure, and evolution of a complete human olfactory receptor gene cluster.</title>
        <authorList>
            <person name="Glusman G."/>
            <person name="Sosinsky A."/>
            <person name="Ben-Asher E."/>
            <person name="Avidan N."/>
            <person name="Sonkin D."/>
            <person name="Bahar A."/>
            <person name="Rosenthal A."/>
            <person name="Clifton S."/>
            <person name="Roe B."/>
            <person name="Ferraz C."/>
            <person name="Demaille J.G."/>
            <person name="Lancet D."/>
        </authorList>
    </citation>
    <scope>NUCLEOTIDE SEQUENCE [GENOMIC DNA]</scope>
    <scope>VARIANT GLN-25</scope>
</reference>
<reference key="3">
    <citation type="journal article" date="2004" name="Genome Res.">
        <title>The status, quality, and expansion of the NIH full-length cDNA project: the Mammalian Gene Collection (MGC).</title>
        <authorList>
            <consortium name="The MGC Project Team"/>
        </authorList>
    </citation>
    <scope>NUCLEOTIDE SEQUENCE [LARGE SCALE MRNA]</scope>
</reference>
<reference key="4">
    <citation type="submission" date="1996-04" db="EMBL/GenBank/DDBJ databases">
        <title>Sequence of cosmid ICRF105cF06137 of the human chromosome 17p13.3 olfactory receptor gene cluster.</title>
        <authorList>
            <person name="Ferraz C."/>
            <person name="Demaille J.G."/>
        </authorList>
    </citation>
    <scope>NUCLEOTIDE SEQUENCE [GENOMIC DNA] OF 1-214</scope>
</reference>
<reference key="5">
    <citation type="journal article" date="2002" name="Genomics">
        <title>DEFOG: a practical scheme for deciphering families of genes.</title>
        <authorList>
            <person name="Fuchs T."/>
            <person name="Malecova B."/>
            <person name="Linhart C."/>
            <person name="Sharan R."/>
            <person name="Khen M."/>
            <person name="Herwig R."/>
            <person name="Shmulevich D."/>
            <person name="Elkon R."/>
            <person name="Steinfath M."/>
            <person name="O'Brien J.K."/>
            <person name="Radelof U."/>
            <person name="Lehrach H."/>
            <person name="Lancet D."/>
            <person name="Shamir R."/>
        </authorList>
    </citation>
    <scope>NUCLEOTIDE SEQUENCE [GENOMIC DNA] OF 68-282</scope>
</reference>
<reference key="6">
    <citation type="journal article" date="1994" name="Hum. Mol. Genet.">
        <title>Olfactory receptor gene cluster on human chromosome 17: possible duplication of an ancestral receptor repertoire.</title>
        <authorList>
            <person name="Ben-Arie N."/>
            <person name="Lancet D."/>
            <person name="Taylor C."/>
            <person name="Khen M."/>
            <person name="Walker N."/>
            <person name="Ledbetter D.H."/>
            <person name="Carrozzo R."/>
            <person name="Patel K."/>
            <person name="Sheer D."/>
            <person name="Lehrach H."/>
            <person name="North M.A."/>
        </authorList>
    </citation>
    <scope>NUCLEOTIDE SEQUENCE [GENOMIC DNA] OF 118-282</scope>
</reference>
<reference key="7">
    <citation type="journal article" date="2003" name="Science">
        <title>Identification of a testicular odorant receptor mediating human sperm chemotaxis.</title>
        <authorList>
            <person name="Spehr M."/>
            <person name="Gisselmann G."/>
            <person name="Poplawski A."/>
            <person name="Riffell J.A."/>
            <person name="Wetzel C.H."/>
            <person name="Zimmer R.K."/>
            <person name="Hatt H."/>
        </authorList>
    </citation>
    <scope>FUNCTION IN SPERM CHEMOTAXIS</scope>
    <scope>TISSUE SPECIFICITY</scope>
</reference>
<reference key="8">
    <citation type="journal article" date="2004" name="Curr. Biol.">
        <title>Dual capacity of a human olfactory receptor.</title>
        <authorList>
            <person name="Spehr M."/>
            <person name="Schwane K."/>
            <person name="Heilmann S."/>
            <person name="Gisselmann G."/>
            <person name="Hummel T."/>
            <person name="Hatt H."/>
        </authorList>
    </citation>
    <scope>FUNCTION IN OLFACTORY RECEPTION</scope>
    <scope>TISSUE SPECIFICITY</scope>
</reference>
<reference key="9">
    <citation type="journal article" date="2004" name="Proc. Natl. Acad. Sci. U.S.A.">
        <title>The human olfactory receptor gene family.</title>
        <authorList>
            <person name="Malnic B."/>
            <person name="Godfrey P.A."/>
            <person name="Buck L.B."/>
        </authorList>
    </citation>
    <scope>IDENTIFICATION</scope>
</reference>
<reference key="10">
    <citation type="journal article" date="2004" name="Proc. Natl. Acad. Sci. U.S.A.">
        <authorList>
            <person name="Malnic B."/>
            <person name="Godfrey P.A."/>
            <person name="Buck L.B."/>
        </authorList>
    </citation>
    <scope>ERRATUM OF PUBMED:14983052</scope>
</reference>
<reference key="11">
    <citation type="journal article" date="2006" name="J. Cell Sci.">
        <title>Novel function of beta-arrestin2 in the nucleus of mature spermatozoa.</title>
        <authorList>
            <person name="Neuhaus E.M."/>
            <person name="Mashukova A."/>
            <person name="Barbour J."/>
            <person name="Wolters D."/>
            <person name="Hatt H."/>
        </authorList>
    </citation>
    <scope>FUNCTION</scope>
    <scope>TISSUE SPECIFICITY</scope>
    <scope>SUBCELLULAR LOCATION</scope>
    <scope>MUTAGENESIS OF SER-230; SER-232; SER-239 AND THR-312</scope>
</reference>
<gene>
    <name type="primary">OR1D2</name>
    <name type="synonym">OLFR1</name>
</gene>
<name>OR1D2_HUMAN</name>